<accession>Q3AI74</accession>
<feature type="chain" id="PRO_0000240964" description="Cysteine--tRNA ligase">
    <location>
        <begin position="1"/>
        <end position="493"/>
    </location>
</feature>
<feature type="region of interest" description="Disordered" evidence="2">
    <location>
        <begin position="154"/>
        <end position="179"/>
    </location>
</feature>
<feature type="short sequence motif" description="'HIGH' region">
    <location>
        <begin position="31"/>
        <end position="41"/>
    </location>
</feature>
<feature type="short sequence motif" description="'KMSKS' region">
    <location>
        <begin position="270"/>
        <end position="274"/>
    </location>
</feature>
<feature type="binding site" evidence="1">
    <location>
        <position position="29"/>
    </location>
    <ligand>
        <name>Zn(2+)</name>
        <dbReference type="ChEBI" id="CHEBI:29105"/>
    </ligand>
</feature>
<feature type="binding site" evidence="1">
    <location>
        <position position="213"/>
    </location>
    <ligand>
        <name>Zn(2+)</name>
        <dbReference type="ChEBI" id="CHEBI:29105"/>
    </ligand>
</feature>
<feature type="binding site" evidence="1">
    <location>
        <position position="238"/>
    </location>
    <ligand>
        <name>Zn(2+)</name>
        <dbReference type="ChEBI" id="CHEBI:29105"/>
    </ligand>
</feature>
<feature type="binding site" evidence="1">
    <location>
        <position position="242"/>
    </location>
    <ligand>
        <name>Zn(2+)</name>
        <dbReference type="ChEBI" id="CHEBI:29105"/>
    </ligand>
</feature>
<feature type="binding site" evidence="1">
    <location>
        <position position="273"/>
    </location>
    <ligand>
        <name>ATP</name>
        <dbReference type="ChEBI" id="CHEBI:30616"/>
    </ligand>
</feature>
<keyword id="KW-0030">Aminoacyl-tRNA synthetase</keyword>
<keyword id="KW-0067">ATP-binding</keyword>
<keyword id="KW-0963">Cytoplasm</keyword>
<keyword id="KW-0436">Ligase</keyword>
<keyword id="KW-0479">Metal-binding</keyword>
<keyword id="KW-0547">Nucleotide-binding</keyword>
<keyword id="KW-0648">Protein biosynthesis</keyword>
<keyword id="KW-0862">Zinc</keyword>
<evidence type="ECO:0000255" key="1">
    <source>
        <dbReference type="HAMAP-Rule" id="MF_00041"/>
    </source>
</evidence>
<evidence type="ECO:0000256" key="2">
    <source>
        <dbReference type="SAM" id="MobiDB-lite"/>
    </source>
</evidence>
<reference key="1">
    <citation type="submission" date="2005-07" db="EMBL/GenBank/DDBJ databases">
        <title>Complete sequence of Synechococcus sp. CC9605.</title>
        <authorList>
            <consortium name="US DOE Joint Genome Institute"/>
            <person name="Copeland A."/>
            <person name="Lucas S."/>
            <person name="Lapidus A."/>
            <person name="Barry K."/>
            <person name="Detter J.C."/>
            <person name="Glavina T."/>
            <person name="Hammon N."/>
            <person name="Israni S."/>
            <person name="Pitluck S."/>
            <person name="Schmutz J."/>
            <person name="Martinez M."/>
            <person name="Larimer F."/>
            <person name="Land M."/>
            <person name="Kyrpides N."/>
            <person name="Ivanova N."/>
            <person name="Richardson P."/>
        </authorList>
    </citation>
    <scope>NUCLEOTIDE SEQUENCE [LARGE SCALE GENOMIC DNA]</scope>
    <source>
        <strain>CC9605</strain>
    </source>
</reference>
<organism>
    <name type="scientific">Synechococcus sp. (strain CC9605)</name>
    <dbReference type="NCBI Taxonomy" id="110662"/>
    <lineage>
        <taxon>Bacteria</taxon>
        <taxon>Bacillati</taxon>
        <taxon>Cyanobacteriota</taxon>
        <taxon>Cyanophyceae</taxon>
        <taxon>Synechococcales</taxon>
        <taxon>Synechococcaceae</taxon>
        <taxon>Synechococcus</taxon>
    </lineage>
</organism>
<dbReference type="EC" id="6.1.1.16" evidence="1"/>
<dbReference type="EMBL" id="CP000110">
    <property type="protein sequence ID" value="ABB35708.1"/>
    <property type="molecule type" value="Genomic_DNA"/>
</dbReference>
<dbReference type="RefSeq" id="WP_011364917.1">
    <property type="nucleotide sequence ID" value="NC_007516.1"/>
</dbReference>
<dbReference type="SMR" id="Q3AI74"/>
<dbReference type="STRING" id="110662.Syncc9605_1967"/>
<dbReference type="KEGG" id="syd:Syncc9605_1967"/>
<dbReference type="eggNOG" id="COG0215">
    <property type="taxonomic scope" value="Bacteria"/>
</dbReference>
<dbReference type="HOGENOM" id="CLU_013528_0_1_3"/>
<dbReference type="OrthoDB" id="9815130at2"/>
<dbReference type="GO" id="GO:0005829">
    <property type="term" value="C:cytosol"/>
    <property type="evidence" value="ECO:0007669"/>
    <property type="project" value="TreeGrafter"/>
</dbReference>
<dbReference type="GO" id="GO:0005524">
    <property type="term" value="F:ATP binding"/>
    <property type="evidence" value="ECO:0007669"/>
    <property type="project" value="UniProtKB-UniRule"/>
</dbReference>
<dbReference type="GO" id="GO:0004817">
    <property type="term" value="F:cysteine-tRNA ligase activity"/>
    <property type="evidence" value="ECO:0007669"/>
    <property type="project" value="UniProtKB-UniRule"/>
</dbReference>
<dbReference type="GO" id="GO:0008270">
    <property type="term" value="F:zinc ion binding"/>
    <property type="evidence" value="ECO:0007669"/>
    <property type="project" value="UniProtKB-UniRule"/>
</dbReference>
<dbReference type="GO" id="GO:0006423">
    <property type="term" value="P:cysteinyl-tRNA aminoacylation"/>
    <property type="evidence" value="ECO:0007669"/>
    <property type="project" value="UniProtKB-UniRule"/>
</dbReference>
<dbReference type="CDD" id="cd00672">
    <property type="entry name" value="CysRS_core"/>
    <property type="match status" value="1"/>
</dbReference>
<dbReference type="FunFam" id="3.40.50.620:FF:000130">
    <property type="entry name" value="Cysteine--tRNA ligase"/>
    <property type="match status" value="1"/>
</dbReference>
<dbReference type="Gene3D" id="1.20.120.1910">
    <property type="entry name" value="Cysteine-tRNA ligase, C-terminal anti-codon recognition domain"/>
    <property type="match status" value="1"/>
</dbReference>
<dbReference type="Gene3D" id="3.40.50.620">
    <property type="entry name" value="HUPs"/>
    <property type="match status" value="1"/>
</dbReference>
<dbReference type="HAMAP" id="MF_00041">
    <property type="entry name" value="Cys_tRNA_synth"/>
    <property type="match status" value="1"/>
</dbReference>
<dbReference type="InterPro" id="IPR015803">
    <property type="entry name" value="Cys-tRNA-ligase"/>
</dbReference>
<dbReference type="InterPro" id="IPR015273">
    <property type="entry name" value="Cys-tRNA-synt_Ia_DALR"/>
</dbReference>
<dbReference type="InterPro" id="IPR024909">
    <property type="entry name" value="Cys-tRNA/MSH_ligase"/>
</dbReference>
<dbReference type="InterPro" id="IPR014729">
    <property type="entry name" value="Rossmann-like_a/b/a_fold"/>
</dbReference>
<dbReference type="InterPro" id="IPR032678">
    <property type="entry name" value="tRNA-synt_1_cat_dom"/>
</dbReference>
<dbReference type="InterPro" id="IPR009080">
    <property type="entry name" value="tRNAsynth_Ia_anticodon-bd"/>
</dbReference>
<dbReference type="NCBIfam" id="TIGR00435">
    <property type="entry name" value="cysS"/>
    <property type="match status" value="1"/>
</dbReference>
<dbReference type="PANTHER" id="PTHR10890:SF3">
    <property type="entry name" value="CYSTEINE--TRNA LIGASE, CYTOPLASMIC"/>
    <property type="match status" value="1"/>
</dbReference>
<dbReference type="PANTHER" id="PTHR10890">
    <property type="entry name" value="CYSTEINYL-TRNA SYNTHETASE"/>
    <property type="match status" value="1"/>
</dbReference>
<dbReference type="Pfam" id="PF09190">
    <property type="entry name" value="DALR_2"/>
    <property type="match status" value="1"/>
</dbReference>
<dbReference type="Pfam" id="PF01406">
    <property type="entry name" value="tRNA-synt_1e"/>
    <property type="match status" value="1"/>
</dbReference>
<dbReference type="PRINTS" id="PR00983">
    <property type="entry name" value="TRNASYNTHCYS"/>
</dbReference>
<dbReference type="SMART" id="SM00840">
    <property type="entry name" value="DALR_2"/>
    <property type="match status" value="1"/>
</dbReference>
<dbReference type="SUPFAM" id="SSF47323">
    <property type="entry name" value="Anticodon-binding domain of a subclass of class I aminoacyl-tRNA synthetases"/>
    <property type="match status" value="1"/>
</dbReference>
<dbReference type="SUPFAM" id="SSF52374">
    <property type="entry name" value="Nucleotidylyl transferase"/>
    <property type="match status" value="1"/>
</dbReference>
<sequence>MSLRFTNSLTSRTEAFEPLTEGKASIYCCGVTVYDLCHLGHARSYINWDVLRRYLIWRGYDVTYIQNYTDIDDKILNRANEEGITMQAVSERNIEAFEVDMGRLNILPADRMPRATGCIEGIQTLISELESKGAAYSSDGDVYFDISKAKNYGKLSGRDPDDQQQGASGRTADGEESRKRHPFDFALWKGAKAGEPSWESPWGPGRPGWHIECSAMVRQELGQTIDIHLGGGDLVFPHHENEIAQSETANGTTLAKLWMHNGMVNVGGTKMSKSLGNFTTIRALLDSGISPMTLRLFVLQAHYRKPLDFTAEALEAAATGWKGLNAALSLGGRHGESLGWSTAAPLAEGAMNADGGPADTALVELEQRFISAMDDDLNSSGGLAVLFDLAKPLRSLANRLERGEDAALPELELKGLEGRWQLLRHLAAVLGLRSEAEAAPSLDDGAIDVAIAARKAAKAAKDFAEADRIRDELAAQGVELIDKPGGVTEWIRA</sequence>
<name>SYC_SYNSC</name>
<protein>
    <recommendedName>
        <fullName evidence="1">Cysteine--tRNA ligase</fullName>
        <ecNumber evidence="1">6.1.1.16</ecNumber>
    </recommendedName>
    <alternativeName>
        <fullName evidence="1">Cysteinyl-tRNA synthetase</fullName>
        <shortName evidence="1">CysRS</shortName>
    </alternativeName>
</protein>
<proteinExistence type="inferred from homology"/>
<comment type="catalytic activity">
    <reaction evidence="1">
        <text>tRNA(Cys) + L-cysteine + ATP = L-cysteinyl-tRNA(Cys) + AMP + diphosphate</text>
        <dbReference type="Rhea" id="RHEA:17773"/>
        <dbReference type="Rhea" id="RHEA-COMP:9661"/>
        <dbReference type="Rhea" id="RHEA-COMP:9679"/>
        <dbReference type="ChEBI" id="CHEBI:30616"/>
        <dbReference type="ChEBI" id="CHEBI:33019"/>
        <dbReference type="ChEBI" id="CHEBI:35235"/>
        <dbReference type="ChEBI" id="CHEBI:78442"/>
        <dbReference type="ChEBI" id="CHEBI:78517"/>
        <dbReference type="ChEBI" id="CHEBI:456215"/>
        <dbReference type="EC" id="6.1.1.16"/>
    </reaction>
</comment>
<comment type="cofactor">
    <cofactor evidence="1">
        <name>Zn(2+)</name>
        <dbReference type="ChEBI" id="CHEBI:29105"/>
    </cofactor>
    <text evidence="1">Binds 1 zinc ion per subunit.</text>
</comment>
<comment type="subunit">
    <text evidence="1">Monomer.</text>
</comment>
<comment type="subcellular location">
    <subcellularLocation>
        <location evidence="1">Cytoplasm</location>
    </subcellularLocation>
</comment>
<comment type="similarity">
    <text evidence="1">Belongs to the class-I aminoacyl-tRNA synthetase family.</text>
</comment>
<gene>
    <name evidence="1" type="primary">cysS</name>
    <name type="ordered locus">Syncc9605_1967</name>
</gene>